<evidence type="ECO:0000255" key="1">
    <source>
        <dbReference type="HAMAP-Rule" id="MF_00052"/>
    </source>
</evidence>
<evidence type="ECO:0000255" key="2">
    <source>
        <dbReference type="PROSITE-ProRule" id="PRU01319"/>
    </source>
</evidence>
<comment type="function">
    <text evidence="1">Endonuclease that specifically degrades the RNA of RNA-DNA hybrids.</text>
</comment>
<comment type="catalytic activity">
    <reaction evidence="1">
        <text>Endonucleolytic cleavage to 5'-phosphomonoester.</text>
        <dbReference type="EC" id="3.1.26.4"/>
    </reaction>
</comment>
<comment type="cofactor">
    <cofactor evidence="1">
        <name>Mn(2+)</name>
        <dbReference type="ChEBI" id="CHEBI:29035"/>
    </cofactor>
    <cofactor evidence="1">
        <name>Mg(2+)</name>
        <dbReference type="ChEBI" id="CHEBI:18420"/>
    </cofactor>
    <text evidence="1">Manganese or magnesium. Binds 1 divalent metal ion per monomer in the absence of substrate. May bind a second metal ion after substrate binding.</text>
</comment>
<comment type="subcellular location">
    <subcellularLocation>
        <location evidence="1">Cytoplasm</location>
    </subcellularLocation>
</comment>
<comment type="similarity">
    <text evidence="1">Belongs to the RNase HII family.</text>
</comment>
<feature type="chain" id="PRO_0000235757" description="Ribonuclease HII">
    <location>
        <begin position="1"/>
        <end position="287"/>
    </location>
</feature>
<feature type="domain" description="RNase H type-2" evidence="2">
    <location>
        <begin position="61"/>
        <end position="287"/>
    </location>
</feature>
<feature type="binding site" evidence="1">
    <location>
        <position position="67"/>
    </location>
    <ligand>
        <name>a divalent metal cation</name>
        <dbReference type="ChEBI" id="CHEBI:60240"/>
    </ligand>
</feature>
<feature type="binding site" evidence="1">
    <location>
        <position position="68"/>
    </location>
    <ligand>
        <name>a divalent metal cation</name>
        <dbReference type="ChEBI" id="CHEBI:60240"/>
    </ligand>
</feature>
<feature type="binding site" evidence="1">
    <location>
        <position position="186"/>
    </location>
    <ligand>
        <name>a divalent metal cation</name>
        <dbReference type="ChEBI" id="CHEBI:60240"/>
    </ligand>
</feature>
<sequence length="287" mass="31610">MNSMPHTESNILQVERNIEQIDIKGQYINLASPIHLSGQINITELFAEYSKNIAQSDTGSALQIGVDEAGRGPLLGSVNVASAILPRAWSGLIEAQLLKDTPLSILTDSKQLSEKKRDLLYPLVQQYAIGYIIADIPAAVIDQINILQATMLGMRLCTEILLEVIAHHLNDMAQDIHQLQTAVLFDGNRCPELNYTSLAQLGIKESMIDCQAWVKGDARHTSIAAASILAKVSRDKTMYALDTEHPEYGIAKHKGYPTRAHMEAIETYGVLSAHRRSFAPVRKALES</sequence>
<accession>Q4FT93</accession>
<dbReference type="EC" id="3.1.26.4" evidence="1"/>
<dbReference type="EMBL" id="CP000082">
    <property type="protein sequence ID" value="AAZ18765.1"/>
    <property type="molecule type" value="Genomic_DNA"/>
</dbReference>
<dbReference type="RefSeq" id="WP_011280189.1">
    <property type="nucleotide sequence ID" value="NC_007204.1"/>
</dbReference>
<dbReference type="SMR" id="Q4FT93"/>
<dbReference type="STRING" id="259536.Psyc_0912"/>
<dbReference type="KEGG" id="par:Psyc_0912"/>
<dbReference type="eggNOG" id="COG0164">
    <property type="taxonomic scope" value="Bacteria"/>
</dbReference>
<dbReference type="HOGENOM" id="CLU_036532_3_2_6"/>
<dbReference type="OrthoDB" id="9803420at2"/>
<dbReference type="Proteomes" id="UP000000546">
    <property type="component" value="Chromosome"/>
</dbReference>
<dbReference type="GO" id="GO:0005737">
    <property type="term" value="C:cytoplasm"/>
    <property type="evidence" value="ECO:0007669"/>
    <property type="project" value="UniProtKB-SubCell"/>
</dbReference>
<dbReference type="GO" id="GO:0032299">
    <property type="term" value="C:ribonuclease H2 complex"/>
    <property type="evidence" value="ECO:0007669"/>
    <property type="project" value="TreeGrafter"/>
</dbReference>
<dbReference type="GO" id="GO:0030145">
    <property type="term" value="F:manganese ion binding"/>
    <property type="evidence" value="ECO:0007669"/>
    <property type="project" value="UniProtKB-UniRule"/>
</dbReference>
<dbReference type="GO" id="GO:0003723">
    <property type="term" value="F:RNA binding"/>
    <property type="evidence" value="ECO:0007669"/>
    <property type="project" value="InterPro"/>
</dbReference>
<dbReference type="GO" id="GO:0004523">
    <property type="term" value="F:RNA-DNA hybrid ribonuclease activity"/>
    <property type="evidence" value="ECO:0007669"/>
    <property type="project" value="UniProtKB-UniRule"/>
</dbReference>
<dbReference type="GO" id="GO:0043137">
    <property type="term" value="P:DNA replication, removal of RNA primer"/>
    <property type="evidence" value="ECO:0007669"/>
    <property type="project" value="TreeGrafter"/>
</dbReference>
<dbReference type="GO" id="GO:0006298">
    <property type="term" value="P:mismatch repair"/>
    <property type="evidence" value="ECO:0007669"/>
    <property type="project" value="TreeGrafter"/>
</dbReference>
<dbReference type="CDD" id="cd07182">
    <property type="entry name" value="RNase_HII_bacteria_HII_like"/>
    <property type="match status" value="1"/>
</dbReference>
<dbReference type="Gene3D" id="3.30.420.10">
    <property type="entry name" value="Ribonuclease H-like superfamily/Ribonuclease H"/>
    <property type="match status" value="1"/>
</dbReference>
<dbReference type="HAMAP" id="MF_00052_B">
    <property type="entry name" value="RNase_HII_B"/>
    <property type="match status" value="1"/>
</dbReference>
<dbReference type="InterPro" id="IPR022898">
    <property type="entry name" value="RNase_HII"/>
</dbReference>
<dbReference type="InterPro" id="IPR001352">
    <property type="entry name" value="RNase_HII/HIII"/>
</dbReference>
<dbReference type="InterPro" id="IPR024567">
    <property type="entry name" value="RNase_HII/HIII_dom"/>
</dbReference>
<dbReference type="InterPro" id="IPR012337">
    <property type="entry name" value="RNaseH-like_sf"/>
</dbReference>
<dbReference type="InterPro" id="IPR036397">
    <property type="entry name" value="RNaseH_sf"/>
</dbReference>
<dbReference type="NCBIfam" id="NF000595">
    <property type="entry name" value="PRK00015.1-3"/>
    <property type="match status" value="1"/>
</dbReference>
<dbReference type="PANTHER" id="PTHR10954">
    <property type="entry name" value="RIBONUCLEASE H2 SUBUNIT A"/>
    <property type="match status" value="1"/>
</dbReference>
<dbReference type="PANTHER" id="PTHR10954:SF18">
    <property type="entry name" value="RIBONUCLEASE HII"/>
    <property type="match status" value="1"/>
</dbReference>
<dbReference type="Pfam" id="PF01351">
    <property type="entry name" value="RNase_HII"/>
    <property type="match status" value="1"/>
</dbReference>
<dbReference type="SUPFAM" id="SSF53098">
    <property type="entry name" value="Ribonuclease H-like"/>
    <property type="match status" value="1"/>
</dbReference>
<dbReference type="PROSITE" id="PS51975">
    <property type="entry name" value="RNASE_H_2"/>
    <property type="match status" value="1"/>
</dbReference>
<name>RNH2_PSYA2</name>
<gene>
    <name evidence="1" type="primary">rnhB</name>
    <name type="ordered locus">Psyc_0912</name>
</gene>
<keyword id="KW-0963">Cytoplasm</keyword>
<keyword id="KW-0255">Endonuclease</keyword>
<keyword id="KW-0378">Hydrolase</keyword>
<keyword id="KW-0464">Manganese</keyword>
<keyword id="KW-0479">Metal-binding</keyword>
<keyword id="KW-0540">Nuclease</keyword>
<keyword id="KW-1185">Reference proteome</keyword>
<reference key="1">
    <citation type="journal article" date="2010" name="Appl. Environ. Microbiol.">
        <title>The genome sequence of Psychrobacter arcticus 273-4, a psychroactive Siberian permafrost bacterium, reveals mechanisms for adaptation to low-temperature growth.</title>
        <authorList>
            <person name="Ayala-del-Rio H.L."/>
            <person name="Chain P.S."/>
            <person name="Grzymski J.J."/>
            <person name="Ponder M.A."/>
            <person name="Ivanova N."/>
            <person name="Bergholz P.W."/>
            <person name="Di Bartolo G."/>
            <person name="Hauser L."/>
            <person name="Land M."/>
            <person name="Bakermans C."/>
            <person name="Rodrigues D."/>
            <person name="Klappenbach J."/>
            <person name="Zarka D."/>
            <person name="Larimer F."/>
            <person name="Richardson P."/>
            <person name="Murray A."/>
            <person name="Thomashow M."/>
            <person name="Tiedje J.M."/>
        </authorList>
    </citation>
    <scope>NUCLEOTIDE SEQUENCE [LARGE SCALE GENOMIC DNA]</scope>
    <source>
        <strain>DSM 17307 / VKM B-2377 / 273-4</strain>
    </source>
</reference>
<proteinExistence type="inferred from homology"/>
<organism>
    <name type="scientific">Psychrobacter arcticus (strain DSM 17307 / VKM B-2377 / 273-4)</name>
    <dbReference type="NCBI Taxonomy" id="259536"/>
    <lineage>
        <taxon>Bacteria</taxon>
        <taxon>Pseudomonadati</taxon>
        <taxon>Pseudomonadota</taxon>
        <taxon>Gammaproteobacteria</taxon>
        <taxon>Moraxellales</taxon>
        <taxon>Moraxellaceae</taxon>
        <taxon>Psychrobacter</taxon>
    </lineage>
</organism>
<protein>
    <recommendedName>
        <fullName evidence="1">Ribonuclease HII</fullName>
        <shortName evidence="1">RNase HII</shortName>
        <ecNumber evidence="1">3.1.26.4</ecNumber>
    </recommendedName>
</protein>